<proteinExistence type="evidence at protein level"/>
<comment type="function">
    <text evidence="1 3">Alcohol acetyltransferase that catalyzes the synthesis of ethyl acetate from ethanol and acetyl-CoA (PubMed:28356220). Can also function as a thioesterase by hydrolyzing acetyl-CoA in the absence of ethanol, as well as esterase hydrolyzing ethyl acetate (By similarity).</text>
</comment>
<comment type="catalytic activity">
    <reaction evidence="3">
        <text>ethanol + acetyl-CoA = ethyl acetate + CoA</text>
        <dbReference type="Rhea" id="RHEA:55972"/>
        <dbReference type="ChEBI" id="CHEBI:16236"/>
        <dbReference type="ChEBI" id="CHEBI:27750"/>
        <dbReference type="ChEBI" id="CHEBI:57287"/>
        <dbReference type="ChEBI" id="CHEBI:57288"/>
        <dbReference type="EC" id="2.3.1.268"/>
    </reaction>
</comment>
<comment type="catalytic activity">
    <reaction evidence="1">
        <text>acetyl-CoA + H2O = acetate + CoA + H(+)</text>
        <dbReference type="Rhea" id="RHEA:20289"/>
        <dbReference type="ChEBI" id="CHEBI:15377"/>
        <dbReference type="ChEBI" id="CHEBI:15378"/>
        <dbReference type="ChEBI" id="CHEBI:30089"/>
        <dbReference type="ChEBI" id="CHEBI:57287"/>
        <dbReference type="ChEBI" id="CHEBI:57288"/>
        <dbReference type="EC" id="3.1.2.1"/>
    </reaction>
</comment>
<comment type="catalytic activity">
    <reaction evidence="1">
        <text>ethyl acetate + H2O = ethanol + acetate + H(+)</text>
        <dbReference type="Rhea" id="RHEA:58148"/>
        <dbReference type="ChEBI" id="CHEBI:15377"/>
        <dbReference type="ChEBI" id="CHEBI:15378"/>
        <dbReference type="ChEBI" id="CHEBI:16236"/>
        <dbReference type="ChEBI" id="CHEBI:27750"/>
        <dbReference type="ChEBI" id="CHEBI:30089"/>
    </reaction>
</comment>
<comment type="subcellular location">
    <subcellularLocation>
        <location evidence="1">Mitochondrion</location>
    </subcellularLocation>
</comment>
<comment type="similarity">
    <text evidence="4">Belongs to the AB hydrolase superfamily.</text>
</comment>
<evidence type="ECO:0000250" key="1">
    <source>
        <dbReference type="UniProtKB" id="A0A1E3P8S6"/>
    </source>
</evidence>
<evidence type="ECO:0000255" key="2"/>
<evidence type="ECO:0000269" key="3">
    <source>
    </source>
</evidence>
<evidence type="ECO:0000305" key="4"/>
<dbReference type="EC" id="2.3.1.268"/>
<dbReference type="EC" id="3.1.2.1"/>
<dbReference type="EC" id="3.1.1.-"/>
<dbReference type="EMBL" id="LPNN01000003">
    <property type="protein sequence ID" value="OEJ90549.1"/>
    <property type="molecule type" value="Genomic_DNA"/>
</dbReference>
<dbReference type="SMR" id="A0A1E5RUL9"/>
<dbReference type="STRING" id="29833.A0A1E5RUL9"/>
<dbReference type="ESTHER" id="hanuv-a0a1e5rul9">
    <property type="family name" value="ABHD11-Acetyl_transferase"/>
</dbReference>
<dbReference type="VEuPathDB" id="FungiDB:AWRI3580_g1230"/>
<dbReference type="OrthoDB" id="8119704at2759"/>
<dbReference type="Proteomes" id="UP000095358">
    <property type="component" value="Unassembled WGS sequence"/>
</dbReference>
<dbReference type="GO" id="GO:0005739">
    <property type="term" value="C:mitochondrion"/>
    <property type="evidence" value="ECO:0007669"/>
    <property type="project" value="UniProtKB-SubCell"/>
</dbReference>
<dbReference type="GO" id="GO:0003986">
    <property type="term" value="F:acetyl-CoA hydrolase activity"/>
    <property type="evidence" value="ECO:0007669"/>
    <property type="project" value="UniProtKB-EC"/>
</dbReference>
<dbReference type="GO" id="GO:0052689">
    <property type="term" value="F:carboxylic ester hydrolase activity"/>
    <property type="evidence" value="ECO:0007669"/>
    <property type="project" value="TreeGrafter"/>
</dbReference>
<dbReference type="GO" id="GO:0016740">
    <property type="term" value="F:transferase activity"/>
    <property type="evidence" value="ECO:0007669"/>
    <property type="project" value="UniProtKB-KW"/>
</dbReference>
<dbReference type="Gene3D" id="3.40.50.1820">
    <property type="entry name" value="alpha/beta hydrolase"/>
    <property type="match status" value="1"/>
</dbReference>
<dbReference type="InterPro" id="IPR000073">
    <property type="entry name" value="AB_hydrolase_1"/>
</dbReference>
<dbReference type="InterPro" id="IPR029058">
    <property type="entry name" value="AB_hydrolase_fold"/>
</dbReference>
<dbReference type="PANTHER" id="PTHR46118">
    <property type="entry name" value="PROTEIN ABHD11"/>
    <property type="match status" value="1"/>
</dbReference>
<dbReference type="PANTHER" id="PTHR46118:SF4">
    <property type="entry name" value="PROTEIN ABHD11"/>
    <property type="match status" value="1"/>
</dbReference>
<dbReference type="Pfam" id="PF00561">
    <property type="entry name" value="Abhydrolase_1"/>
    <property type="match status" value="1"/>
</dbReference>
<dbReference type="SUPFAM" id="SSF53474">
    <property type="entry name" value="alpha/beta-Hydrolases"/>
    <property type="match status" value="1"/>
</dbReference>
<name>EAT1_HANUV</name>
<reference key="1">
    <citation type="journal article" date="2016" name="Genome Announc.">
        <title>Genome sequences of three species of Hanseniaspora isolated from spontaneous wine fermentations.</title>
        <authorList>
            <person name="Sternes P.R."/>
            <person name="Lee D."/>
            <person name="Kutyna D.R."/>
            <person name="Borneman A.R."/>
        </authorList>
    </citation>
    <scope>NUCLEOTIDE SEQUENCE [LARGE SCALE GENOMIC DNA]</scope>
    <source>
        <strain>AWRI3580</strain>
    </source>
</reference>
<reference key="2">
    <citation type="journal article" date="2017" name="Metab. Eng.">
        <title>Ethyl acetate production by the elusive alcohol acetyltransferase from yeast.</title>
        <authorList>
            <person name="Kruis A.J."/>
            <person name="Levisson M."/>
            <person name="Mars A.E."/>
            <person name="van der Ploeg M."/>
            <person name="Garces Daza F."/>
            <person name="Ellena V."/>
            <person name="Kengen S.W.M."/>
            <person name="van der Oost J."/>
            <person name="Weusthuis R.A."/>
        </authorList>
    </citation>
    <scope>FUNCTION</scope>
    <scope>CATALYTIC ACTIVITY</scope>
    <source>
        <strain>CECT 11105</strain>
    </source>
</reference>
<protein>
    <recommendedName>
        <fullName>Ethanol acetyltransferase 1</fullName>
        <ecNumber>2.3.1.268</ecNumber>
    </recommendedName>
    <alternativeName>
        <fullName>Acetyl-CoA hydrolase</fullName>
        <ecNumber>3.1.2.1</ecNumber>
    </alternativeName>
    <alternativeName>
        <fullName>Acetyl-CoA thioesterase</fullName>
    </alternativeName>
    <alternativeName>
        <fullName>Alcohol acetyltransferase</fullName>
        <shortName>AAT</shortName>
    </alternativeName>
    <alternativeName>
        <fullName>Ethyl acetate esterase</fullName>
        <ecNumber>3.1.1.-</ecNumber>
    </alternativeName>
</protein>
<accession>A0A1E5RUL9</accession>
<gene>
    <name type="primary">EAT1</name>
    <name type="ORF">AWRI3580_g1230</name>
</gene>
<keyword id="KW-0378">Hydrolase</keyword>
<keyword id="KW-0496">Mitochondrion</keyword>
<keyword id="KW-1185">Reference proteome</keyword>
<keyword id="KW-0808">Transferase</keyword>
<keyword id="KW-0809">Transit peptide</keyword>
<feature type="transit peptide" description="Mitochondrion" evidence="2">
    <location>
        <begin position="1"/>
        <end position="16"/>
    </location>
</feature>
<feature type="chain" id="PRO_0000446178" description="Ethanol acetyltransferase 1">
    <location>
        <begin position="17"/>
        <end position="334"/>
    </location>
</feature>
<feature type="active site" description="Charge relay system" evidence="1">
    <location>
        <position position="124"/>
    </location>
</feature>
<feature type="active site" description="Charge relay system" evidence="1">
    <location>
        <position position="148"/>
    </location>
</feature>
<feature type="active site" description="Charge relay system" evidence="1">
    <location>
        <position position="296"/>
    </location>
</feature>
<sequence>MFASNVVVLNKRSIRFIQTQLPVKATVDMKFDLHLPKRSVIGKLPYHVEEPIVFVHGLFGSKKNYFNDCEKLSNLLQTPIYTIDFRNHGETEHAMPFDYETLTNDLIHFVEKHNLKNPSLIGYSLGAKVSMLALLKQPSLFKSAMIIDNSPVVQPEIVPFLKVFRKACVETVNKAGIRADDKDYRAKANQYMSKFIPNAGIKGYLLQNCINKPPKNPSPVINYNDGMIHWKNPVNHMANVSEENVADWPTIPEGIKFNGPVGFLRGTKSDFVLQKGRDAIAKLFPNNRIFDINATHFILNERPSEYVGIVADWFKTGRHDVEKLAAKKAKNAQL</sequence>
<organism>
    <name type="scientific">Hanseniaspora uvarum</name>
    <name type="common">Yeast</name>
    <name type="synonym">Kloeckera apiculata</name>
    <dbReference type="NCBI Taxonomy" id="29833"/>
    <lineage>
        <taxon>Eukaryota</taxon>
        <taxon>Fungi</taxon>
        <taxon>Dikarya</taxon>
        <taxon>Ascomycota</taxon>
        <taxon>Saccharomycotina</taxon>
        <taxon>Saccharomycetes</taxon>
        <taxon>Saccharomycodales</taxon>
        <taxon>Saccharomycodaceae</taxon>
        <taxon>Hanseniaspora</taxon>
    </lineage>
</organism>